<accession>Q976H8</accession>
<sequence length="91" mass="10006">MTDVLVVVKVFPESDEVNLDNLYEEIGKKLPAGYKLVRKETEPIAYGLKALIAYVQMPENVEGGTDTLEEIINSIQGVSHAEVVGITRLGF</sequence>
<dbReference type="EMBL" id="BA000023">
    <property type="protein sequence ID" value="BAB65169.1"/>
    <property type="molecule type" value="Genomic_DNA"/>
</dbReference>
<dbReference type="RefSeq" id="WP_010978151.1">
    <property type="nucleotide sequence ID" value="NC_003106.2"/>
</dbReference>
<dbReference type="SMR" id="Q976H8"/>
<dbReference type="STRING" id="273063.STK_02087"/>
<dbReference type="KEGG" id="sto:STK_02087"/>
<dbReference type="PATRIC" id="fig|273063.9.peg.256"/>
<dbReference type="eggNOG" id="arCOG01988">
    <property type="taxonomic scope" value="Archaea"/>
</dbReference>
<dbReference type="OrthoDB" id="84643at2157"/>
<dbReference type="Proteomes" id="UP000001015">
    <property type="component" value="Chromosome"/>
</dbReference>
<dbReference type="GO" id="GO:0003746">
    <property type="term" value="F:translation elongation factor activity"/>
    <property type="evidence" value="ECO:0007669"/>
    <property type="project" value="UniProtKB-UniRule"/>
</dbReference>
<dbReference type="CDD" id="cd00292">
    <property type="entry name" value="EF1B"/>
    <property type="match status" value="1"/>
</dbReference>
<dbReference type="Gene3D" id="3.30.70.60">
    <property type="match status" value="1"/>
</dbReference>
<dbReference type="HAMAP" id="MF_00043">
    <property type="entry name" value="EF1_beta"/>
    <property type="match status" value="1"/>
</dbReference>
<dbReference type="InterPro" id="IPR036219">
    <property type="entry name" value="eEF-1beta-like_sf"/>
</dbReference>
<dbReference type="InterPro" id="IPR014038">
    <property type="entry name" value="EF1B_bsu/dsu_GNE"/>
</dbReference>
<dbReference type="InterPro" id="IPR014717">
    <property type="entry name" value="Transl_elong_EF1B/ribsomal_bS6"/>
</dbReference>
<dbReference type="InterPro" id="IPR004542">
    <property type="entry name" value="Transl_elong_EF1B_B_arc"/>
</dbReference>
<dbReference type="NCBIfam" id="TIGR00489">
    <property type="entry name" value="aEF-1_beta"/>
    <property type="match status" value="1"/>
</dbReference>
<dbReference type="NCBIfam" id="NF001670">
    <property type="entry name" value="PRK00435.1"/>
    <property type="match status" value="1"/>
</dbReference>
<dbReference type="PANTHER" id="PTHR39647">
    <property type="entry name" value="ELONGATION FACTOR 1-BETA"/>
    <property type="match status" value="1"/>
</dbReference>
<dbReference type="PANTHER" id="PTHR39647:SF1">
    <property type="entry name" value="ELONGATION FACTOR 1-BETA"/>
    <property type="match status" value="1"/>
</dbReference>
<dbReference type="Pfam" id="PF00736">
    <property type="entry name" value="EF1_GNE"/>
    <property type="match status" value="1"/>
</dbReference>
<dbReference type="PIRSF" id="PIRSF006521">
    <property type="entry name" value="Transl_elong_EF1B_B_arc"/>
    <property type="match status" value="1"/>
</dbReference>
<dbReference type="SMART" id="SM00888">
    <property type="entry name" value="EF1_GNE"/>
    <property type="match status" value="1"/>
</dbReference>
<dbReference type="SUPFAM" id="SSF54984">
    <property type="entry name" value="eEF-1beta-like"/>
    <property type="match status" value="1"/>
</dbReference>
<proteinExistence type="inferred from homology"/>
<reference key="1">
    <citation type="journal article" date="2001" name="DNA Res.">
        <title>Complete genome sequence of an aerobic thermoacidophilic Crenarchaeon, Sulfolobus tokodaii strain7.</title>
        <authorList>
            <person name="Kawarabayasi Y."/>
            <person name="Hino Y."/>
            <person name="Horikawa H."/>
            <person name="Jin-no K."/>
            <person name="Takahashi M."/>
            <person name="Sekine M."/>
            <person name="Baba S."/>
            <person name="Ankai A."/>
            <person name="Kosugi H."/>
            <person name="Hosoyama A."/>
            <person name="Fukui S."/>
            <person name="Nagai Y."/>
            <person name="Nishijima K."/>
            <person name="Otsuka R."/>
            <person name="Nakazawa H."/>
            <person name="Takamiya M."/>
            <person name="Kato Y."/>
            <person name="Yoshizawa T."/>
            <person name="Tanaka T."/>
            <person name="Kudoh Y."/>
            <person name="Yamazaki J."/>
            <person name="Kushida N."/>
            <person name="Oguchi A."/>
            <person name="Aoki K."/>
            <person name="Masuda S."/>
            <person name="Yanagii M."/>
            <person name="Nishimura M."/>
            <person name="Yamagishi A."/>
            <person name="Oshima T."/>
            <person name="Kikuchi H."/>
        </authorList>
    </citation>
    <scope>NUCLEOTIDE SEQUENCE [LARGE SCALE GENOMIC DNA]</scope>
    <source>
        <strain>DSM 16993 / JCM 10545 / NBRC 100140 / 7</strain>
    </source>
</reference>
<evidence type="ECO:0000255" key="1">
    <source>
        <dbReference type="HAMAP-Rule" id="MF_00043"/>
    </source>
</evidence>
<name>EF1B_SULTO</name>
<protein>
    <recommendedName>
        <fullName evidence="1">Elongation factor 1-beta</fullName>
        <shortName evidence="1">EF-1-beta</shortName>
    </recommendedName>
    <alternativeName>
        <fullName evidence="1">aEF-1beta</fullName>
    </alternativeName>
</protein>
<comment type="function">
    <text evidence="1">Promotes the exchange of GDP for GTP in EF-1-alpha/GDP, thus allowing the regeneration of EF-1-alpha/GTP that could then be used to form the ternary complex EF-1-alpha/GTP/AAtRNA.</text>
</comment>
<comment type="similarity">
    <text evidence="1">Belongs to the EF-1-beta/EF-1-delta family.</text>
</comment>
<organism>
    <name type="scientific">Sulfurisphaera tokodaii (strain DSM 16993 / JCM 10545 / NBRC 100140 / 7)</name>
    <name type="common">Sulfolobus tokodaii</name>
    <dbReference type="NCBI Taxonomy" id="273063"/>
    <lineage>
        <taxon>Archaea</taxon>
        <taxon>Thermoproteota</taxon>
        <taxon>Thermoprotei</taxon>
        <taxon>Sulfolobales</taxon>
        <taxon>Sulfolobaceae</taxon>
        <taxon>Sulfurisphaera</taxon>
    </lineage>
</organism>
<feature type="chain" id="PRO_0000155069" description="Elongation factor 1-beta">
    <location>
        <begin position="1"/>
        <end position="91"/>
    </location>
</feature>
<keyword id="KW-0251">Elongation factor</keyword>
<keyword id="KW-0648">Protein biosynthesis</keyword>
<keyword id="KW-1185">Reference proteome</keyword>
<gene>
    <name evidence="1" type="primary">ef1b</name>
    <name type="ordered locus">STK_02087</name>
    <name type="ORF">STS027</name>
</gene>